<proteinExistence type="evidence at protein level"/>
<organism>
    <name type="scientific">Mus musculus</name>
    <name type="common">Mouse</name>
    <dbReference type="NCBI Taxonomy" id="10090"/>
    <lineage>
        <taxon>Eukaryota</taxon>
        <taxon>Metazoa</taxon>
        <taxon>Chordata</taxon>
        <taxon>Craniata</taxon>
        <taxon>Vertebrata</taxon>
        <taxon>Euteleostomi</taxon>
        <taxon>Mammalia</taxon>
        <taxon>Eutheria</taxon>
        <taxon>Euarchontoglires</taxon>
        <taxon>Glires</taxon>
        <taxon>Rodentia</taxon>
        <taxon>Myomorpha</taxon>
        <taxon>Muroidea</taxon>
        <taxon>Muridae</taxon>
        <taxon>Murinae</taxon>
        <taxon>Mus</taxon>
        <taxon>Mus</taxon>
    </lineage>
</organism>
<evidence type="ECO:0000250" key="1"/>
<evidence type="ECO:0000250" key="2">
    <source>
        <dbReference type="UniProtKB" id="Q9NUB1"/>
    </source>
</evidence>
<evidence type="ECO:0000255" key="3"/>
<evidence type="ECO:0000269" key="4">
    <source>
    </source>
</evidence>
<evidence type="ECO:0000269" key="5">
    <source>
    </source>
</evidence>
<evidence type="ECO:0000269" key="6">
    <source>
    </source>
</evidence>
<evidence type="ECO:0000303" key="7">
    <source>
    </source>
</evidence>
<evidence type="ECO:0000303" key="8">
    <source>
    </source>
</evidence>
<evidence type="ECO:0000305" key="9"/>
<evidence type="ECO:0000305" key="10">
    <source>
    </source>
</evidence>
<evidence type="ECO:0000305" key="11">
    <source>
    </source>
</evidence>
<comment type="function">
    <text evidence="4 5 6">Catalyzes the synthesis of acetyl-CoA from short-chain fatty acids (PubMed:11150295, PubMed:16790548). Acetate is the preferred substrate (PubMed:11150295, PubMed:16790548). Can also utilize propionate with a much lower affinity (PubMed:11150295). Provides acetyl-CoA that is utilized mainly for oxidation under ketogenic conditions (PubMed:11150295). Involved in thermogenesis under ketogenic conditions, using acetate as a vital fuel when carbohydrate availability is insufficient (PubMed:19187775).</text>
</comment>
<comment type="catalytic activity">
    <reaction evidence="4 5">
        <text>acetate + ATP + CoA = acetyl-CoA + AMP + diphosphate</text>
        <dbReference type="Rhea" id="RHEA:23176"/>
        <dbReference type="ChEBI" id="CHEBI:30089"/>
        <dbReference type="ChEBI" id="CHEBI:30616"/>
        <dbReference type="ChEBI" id="CHEBI:33019"/>
        <dbReference type="ChEBI" id="CHEBI:57287"/>
        <dbReference type="ChEBI" id="CHEBI:57288"/>
        <dbReference type="ChEBI" id="CHEBI:456215"/>
        <dbReference type="EC" id="6.2.1.1"/>
    </reaction>
    <physiologicalReaction direction="left-to-right" evidence="10 11">
        <dbReference type="Rhea" id="RHEA:23177"/>
    </physiologicalReaction>
</comment>
<comment type="catalytic activity">
    <reaction evidence="4">
        <text>propanoate + ATP + CoA = propanoyl-CoA + AMP + diphosphate</text>
        <dbReference type="Rhea" id="RHEA:20373"/>
        <dbReference type="ChEBI" id="CHEBI:17272"/>
        <dbReference type="ChEBI" id="CHEBI:30616"/>
        <dbReference type="ChEBI" id="CHEBI:33019"/>
        <dbReference type="ChEBI" id="CHEBI:57287"/>
        <dbReference type="ChEBI" id="CHEBI:57392"/>
        <dbReference type="ChEBI" id="CHEBI:456215"/>
        <dbReference type="EC" id="6.2.1.17"/>
    </reaction>
    <physiologicalReaction direction="left-to-right" evidence="10">
        <dbReference type="Rhea" id="RHEA:20374"/>
    </physiologicalReaction>
</comment>
<comment type="activity regulation">
    <text evidence="5">Inhibited by acetylation at Lys-635 and activated by deacetylation mediated by the deacetylase SIRT3.</text>
</comment>
<comment type="biophysicochemical properties">
    <kinetics>
        <KM evidence="4">0.06 mM for acetate</KM>
        <KM evidence="4">4.1 mM for propionate</KM>
    </kinetics>
</comment>
<comment type="subunit">
    <text evidence="2">Interacts with SIRT3.</text>
</comment>
<comment type="subcellular location">
    <subcellularLocation>
        <location evidence="4">Mitochondrion matrix</location>
    </subcellularLocation>
</comment>
<comment type="tissue specificity">
    <text evidence="4">Highly expressed in heart, testis, kidney, skeletal muscle, lung and spleen. Detected at low levels in brain.</text>
</comment>
<comment type="induction">
    <text evidence="4">By fasting.</text>
</comment>
<comment type="PTM">
    <text evidence="5">Reversibly acetylated at Lys-635 (PubMed:16790548). The acetyl-CoA synthase activity is inhibited by acetylation and activated by deacetylation mediated by the deacetylase SIRT3.</text>
</comment>
<comment type="disruption phenotype">
    <text evidence="6">No visible phenotype at birth, but exhibit significant growth retardation at the time of weaning. Attain normal size and weight when fed normally. Exhibit hypothermia and hypoglycemia when fed high-fat, low-carbohydrate diet, leading to 50% mortality. Display strongly reduced whole-body acetate oxidation when fasting. Fasting adults exhibit hypothermia, reduced capacity to sustain running and low ATP levels.</text>
</comment>
<comment type="similarity">
    <text evidence="9">Belongs to the ATP-dependent AMP-binding enzyme family.</text>
</comment>
<comment type="sequence caution" evidence="9">
    <conflict type="erroneous initiation">
        <sequence resource="EMBL-CDS" id="AAH30930"/>
    </conflict>
</comment>
<name>ACS2L_MOUSE</name>
<gene>
    <name type="primary">Acss1</name>
    <name type="synonym">Acas2</name>
    <name type="synonym">Acas2l</name>
</gene>
<protein>
    <recommendedName>
        <fullName>Acetyl-coenzyme A synthetase 2-like, mitochondrial</fullName>
        <ecNumber evidence="4 5">6.2.1.1</ecNumber>
    </recommendedName>
    <alternativeName>
        <fullName>Acetate--CoA ligase 2</fullName>
    </alternativeName>
    <alternativeName>
        <fullName evidence="7 8">Acetyl-CoA synthetase 2</fullName>
        <shortName evidence="7 8">AceCS2</shortName>
    </alternativeName>
    <alternativeName>
        <fullName>Acyl-CoA synthetase short-chain family member 1</fullName>
    </alternativeName>
    <alternativeName>
        <fullName>Propionate--CoA ligase</fullName>
        <ecNumber evidence="4">6.2.1.17</ecNumber>
    </alternativeName>
</protein>
<feature type="transit peptide" description="Mitochondrion" evidence="3">
    <location>
        <begin position="1"/>
        <end position="38"/>
    </location>
</feature>
<feature type="chain" id="PRO_0000000597" description="Acetyl-coenzyme A synthetase 2-like, mitochondrial">
    <location>
        <begin position="39"/>
        <end position="682"/>
    </location>
</feature>
<feature type="binding site" evidence="1">
    <location>
        <begin position="217"/>
        <end position="220"/>
    </location>
    <ligand>
        <name>CoA</name>
        <dbReference type="ChEBI" id="CHEBI:57287"/>
    </ligand>
</feature>
<feature type="binding site" evidence="1">
    <location>
        <position position="334"/>
    </location>
    <ligand>
        <name>CoA</name>
        <dbReference type="ChEBI" id="CHEBI:57287"/>
    </ligand>
</feature>
<feature type="binding site" evidence="1">
    <location>
        <begin position="410"/>
        <end position="412"/>
    </location>
    <ligand>
        <name>ATP</name>
        <dbReference type="ChEBI" id="CHEBI:30616"/>
    </ligand>
</feature>
<feature type="binding site" evidence="1">
    <location>
        <begin position="434"/>
        <end position="439"/>
    </location>
    <ligand>
        <name>ATP</name>
        <dbReference type="ChEBI" id="CHEBI:30616"/>
    </ligand>
</feature>
<feature type="binding site" evidence="1">
    <location>
        <position position="526"/>
    </location>
    <ligand>
        <name>ATP</name>
        <dbReference type="ChEBI" id="CHEBI:30616"/>
    </ligand>
</feature>
<feature type="binding site" evidence="1">
    <location>
        <position position="541"/>
    </location>
    <ligand>
        <name>ATP</name>
        <dbReference type="ChEBI" id="CHEBI:30616"/>
    </ligand>
</feature>
<feature type="binding site" evidence="1">
    <location>
        <position position="549"/>
    </location>
    <ligand>
        <name>CoA</name>
        <dbReference type="ChEBI" id="CHEBI:57287"/>
    </ligand>
</feature>
<feature type="binding site" evidence="1">
    <location>
        <position position="552"/>
    </location>
    <ligand>
        <name>ATP</name>
        <dbReference type="ChEBI" id="CHEBI:30616"/>
    </ligand>
</feature>
<feature type="modified residue" description="N6-acetyllysine" evidence="2">
    <location>
        <position position="389"/>
    </location>
</feature>
<feature type="modified residue" description="N6-acetyllysine" evidence="5">
    <location>
        <position position="635"/>
    </location>
</feature>
<feature type="sequence conflict" description="In Ref. 3; AAH30930." evidence="9" ref="3">
    <original>W</original>
    <variation>C</variation>
    <location>
        <position position="332"/>
    </location>
</feature>
<keyword id="KW-0007">Acetylation</keyword>
<keyword id="KW-0067">ATP-binding</keyword>
<keyword id="KW-0436">Ligase</keyword>
<keyword id="KW-0443">Lipid metabolism</keyword>
<keyword id="KW-0496">Mitochondrion</keyword>
<keyword id="KW-0547">Nucleotide-binding</keyword>
<keyword id="KW-1185">Reference proteome</keyword>
<keyword id="KW-0809">Transit peptide</keyword>
<dbReference type="EC" id="6.2.1.1" evidence="4 5"/>
<dbReference type="EC" id="6.2.1.17" evidence="4"/>
<dbReference type="EMBL" id="AB046742">
    <property type="protein sequence ID" value="BAB21612.1"/>
    <property type="molecule type" value="mRNA"/>
</dbReference>
<dbReference type="EMBL" id="AK088244">
    <property type="protein sequence ID" value="BAC40232.1"/>
    <property type="molecule type" value="mRNA"/>
</dbReference>
<dbReference type="EMBL" id="BC030930">
    <property type="protein sequence ID" value="AAH30930.1"/>
    <property type="status" value="ALT_INIT"/>
    <property type="molecule type" value="mRNA"/>
</dbReference>
<dbReference type="CCDS" id="CCDS16859.1"/>
<dbReference type="RefSeq" id="NP_542142.1">
    <property type="nucleotide sequence ID" value="NM_080575.2"/>
</dbReference>
<dbReference type="SMR" id="Q99NB1"/>
<dbReference type="BioGRID" id="213026">
    <property type="interactions" value="3"/>
</dbReference>
<dbReference type="DIP" id="DIP-61209N"/>
<dbReference type="FunCoup" id="Q99NB1">
    <property type="interactions" value="623"/>
</dbReference>
<dbReference type="IntAct" id="Q99NB1">
    <property type="interactions" value="6"/>
</dbReference>
<dbReference type="MINT" id="Q99NB1"/>
<dbReference type="STRING" id="10090.ENSMUSP00000028944"/>
<dbReference type="GlyGen" id="Q99NB1">
    <property type="glycosylation" value="1 site, 1 O-linked glycan (1 site)"/>
</dbReference>
<dbReference type="iPTMnet" id="Q99NB1"/>
<dbReference type="PhosphoSitePlus" id="Q99NB1"/>
<dbReference type="SwissPalm" id="Q99NB1"/>
<dbReference type="jPOST" id="Q99NB1"/>
<dbReference type="PaxDb" id="10090-ENSMUSP00000028944"/>
<dbReference type="ProteomicsDB" id="285542"/>
<dbReference type="Antibodypedia" id="24959">
    <property type="antibodies" value="140 antibodies from 24 providers"/>
</dbReference>
<dbReference type="DNASU" id="68738"/>
<dbReference type="Ensembl" id="ENSMUST00000028944.4">
    <property type="protein sequence ID" value="ENSMUSP00000028944.4"/>
    <property type="gene ID" value="ENSMUSG00000027452.12"/>
</dbReference>
<dbReference type="GeneID" id="68738"/>
<dbReference type="KEGG" id="mmu:68738"/>
<dbReference type="UCSC" id="uc008muf.2">
    <property type="organism name" value="mouse"/>
</dbReference>
<dbReference type="AGR" id="MGI:1915988"/>
<dbReference type="CTD" id="84532"/>
<dbReference type="MGI" id="MGI:1915988">
    <property type="gene designation" value="Acss1"/>
</dbReference>
<dbReference type="VEuPathDB" id="HostDB:ENSMUSG00000027452"/>
<dbReference type="eggNOG" id="KOG1175">
    <property type="taxonomic scope" value="Eukaryota"/>
</dbReference>
<dbReference type="GeneTree" id="ENSGT00940000158550"/>
<dbReference type="HOGENOM" id="CLU_000022_3_6_1"/>
<dbReference type="InParanoid" id="Q99NB1"/>
<dbReference type="OMA" id="AIKASWP"/>
<dbReference type="OrthoDB" id="1706066at2759"/>
<dbReference type="PhylomeDB" id="Q99NB1"/>
<dbReference type="TreeFam" id="TF354241"/>
<dbReference type="BRENDA" id="6.2.1.1">
    <property type="organism ID" value="3474"/>
</dbReference>
<dbReference type="Reactome" id="R-MMU-71384">
    <property type="pathway name" value="Ethanol oxidation"/>
</dbReference>
<dbReference type="BioGRID-ORCS" id="68738">
    <property type="hits" value="2 hits in 78 CRISPR screens"/>
</dbReference>
<dbReference type="ChiTaRS" id="Acss1">
    <property type="organism name" value="mouse"/>
</dbReference>
<dbReference type="PRO" id="PR:Q99NB1"/>
<dbReference type="Proteomes" id="UP000000589">
    <property type="component" value="Chromosome 2"/>
</dbReference>
<dbReference type="RNAct" id="Q99NB1">
    <property type="molecule type" value="protein"/>
</dbReference>
<dbReference type="Bgee" id="ENSMUSG00000027452">
    <property type="expression patterns" value="Expressed in submandibular gland and 260 other cell types or tissues"/>
</dbReference>
<dbReference type="ExpressionAtlas" id="Q99NB1">
    <property type="expression patterns" value="baseline and differential"/>
</dbReference>
<dbReference type="GO" id="GO:0005759">
    <property type="term" value="C:mitochondrial matrix"/>
    <property type="evidence" value="ECO:0000314"/>
    <property type="project" value="MGI"/>
</dbReference>
<dbReference type="GO" id="GO:0005739">
    <property type="term" value="C:mitochondrion"/>
    <property type="evidence" value="ECO:0007005"/>
    <property type="project" value="MGI"/>
</dbReference>
<dbReference type="GO" id="GO:0003987">
    <property type="term" value="F:acetate-CoA ligase activity"/>
    <property type="evidence" value="ECO:0000314"/>
    <property type="project" value="UniProtKB"/>
</dbReference>
<dbReference type="GO" id="GO:0016208">
    <property type="term" value="F:AMP binding"/>
    <property type="evidence" value="ECO:0007669"/>
    <property type="project" value="InterPro"/>
</dbReference>
<dbReference type="GO" id="GO:0005524">
    <property type="term" value="F:ATP binding"/>
    <property type="evidence" value="ECO:0007669"/>
    <property type="project" value="UniProtKB-KW"/>
</dbReference>
<dbReference type="GO" id="GO:0050218">
    <property type="term" value="F:propionate-CoA ligase activity"/>
    <property type="evidence" value="ECO:0000314"/>
    <property type="project" value="UniProtKB"/>
</dbReference>
<dbReference type="GO" id="GO:0019413">
    <property type="term" value="P:acetate biosynthetic process"/>
    <property type="evidence" value="ECO:0007669"/>
    <property type="project" value="Ensembl"/>
</dbReference>
<dbReference type="GO" id="GO:0006085">
    <property type="term" value="P:acetyl-CoA biosynthetic process"/>
    <property type="evidence" value="ECO:0000314"/>
    <property type="project" value="MGI"/>
</dbReference>
<dbReference type="GO" id="GO:0019427">
    <property type="term" value="P:acetyl-CoA biosynthetic process from acetate"/>
    <property type="evidence" value="ECO:0007669"/>
    <property type="project" value="InterPro"/>
</dbReference>
<dbReference type="GO" id="GO:0019542">
    <property type="term" value="P:propionate biosynthetic process"/>
    <property type="evidence" value="ECO:0007669"/>
    <property type="project" value="Ensembl"/>
</dbReference>
<dbReference type="CDD" id="cd05966">
    <property type="entry name" value="ACS"/>
    <property type="match status" value="1"/>
</dbReference>
<dbReference type="FunFam" id="3.40.50.12780:FF:000011">
    <property type="entry name" value="Acetyl-coenzyme A synthetase 2-like, mitochondrial"/>
    <property type="match status" value="1"/>
</dbReference>
<dbReference type="Gene3D" id="3.30.300.30">
    <property type="match status" value="1"/>
</dbReference>
<dbReference type="Gene3D" id="3.40.50.12780">
    <property type="entry name" value="N-terminal domain of ligase-like"/>
    <property type="match status" value="1"/>
</dbReference>
<dbReference type="InterPro" id="IPR011904">
    <property type="entry name" value="Ac_CoA_lig"/>
</dbReference>
<dbReference type="InterPro" id="IPR032387">
    <property type="entry name" value="ACAS_N"/>
</dbReference>
<dbReference type="InterPro" id="IPR025110">
    <property type="entry name" value="AMP-bd_C"/>
</dbReference>
<dbReference type="InterPro" id="IPR045851">
    <property type="entry name" value="AMP-bd_C_sf"/>
</dbReference>
<dbReference type="InterPro" id="IPR020845">
    <property type="entry name" value="AMP-binding_CS"/>
</dbReference>
<dbReference type="InterPro" id="IPR000873">
    <property type="entry name" value="AMP-dep_synth/lig_dom"/>
</dbReference>
<dbReference type="InterPro" id="IPR042099">
    <property type="entry name" value="ANL_N_sf"/>
</dbReference>
<dbReference type="NCBIfam" id="TIGR02188">
    <property type="entry name" value="Ac_CoA_lig_AcsA"/>
    <property type="match status" value="1"/>
</dbReference>
<dbReference type="NCBIfam" id="NF001208">
    <property type="entry name" value="PRK00174.1"/>
    <property type="match status" value="1"/>
</dbReference>
<dbReference type="PANTHER" id="PTHR24095">
    <property type="entry name" value="ACETYL-COENZYME A SYNTHETASE"/>
    <property type="match status" value="1"/>
</dbReference>
<dbReference type="PANTHER" id="PTHR24095:SF110">
    <property type="entry name" value="ACETYL-COENZYME A SYNTHETASE 2-LIKE, MITOCHONDRIAL"/>
    <property type="match status" value="1"/>
</dbReference>
<dbReference type="Pfam" id="PF16177">
    <property type="entry name" value="ACAS_N"/>
    <property type="match status" value="1"/>
</dbReference>
<dbReference type="Pfam" id="PF00501">
    <property type="entry name" value="AMP-binding"/>
    <property type="match status" value="1"/>
</dbReference>
<dbReference type="Pfam" id="PF13193">
    <property type="entry name" value="AMP-binding_C"/>
    <property type="match status" value="1"/>
</dbReference>
<dbReference type="SUPFAM" id="SSF56801">
    <property type="entry name" value="Acetyl-CoA synthetase-like"/>
    <property type="match status" value="1"/>
</dbReference>
<dbReference type="PROSITE" id="PS00455">
    <property type="entry name" value="AMP_BINDING"/>
    <property type="match status" value="1"/>
</dbReference>
<accession>Q99NB1</accession>
<accession>Q8K0M6</accession>
<sequence length="682" mass="74623">MAARSLGSGVGRLLRGLQGRSGQSGWSLSVSRSTATRLPGCVPAAAQPGSYPALSAQAAQEPAAFWGPLARDTLVWDTPYHTVWDCDFRTGKIGWFLGGQLNVSVNCLDQHVQKSPETIALIWERDEPGTEVRITYRELLETTCRLANTLKRHGVHRGDRVAIYMPVSPLAVAAMLACARIGAIHTVVFAGFSAESLAGRINDAKCKAVITFNQGLRGGRVVELKKIVDEAVKSCPTVQHVLVAHRTDTKVPMGSLDIPLEQEMAKEAPVCTPESMSSEDMLFMLYTSGSTGTPKGLVHTQAGYLLYAAMTHKLVFDYQPGDVFGCVADIGWITGHSYVVYGPLCNGATTVLFESTPVYPDAGRYWETVQRLKINQFYGAPTAVRLLLKYGDAWVKKYDRSSLRTLGSVGEPINHEAWEWLHKVVGDGRCTLVDTWWQTETGGICIAPRPSEDGAEILPGMAMRPFFGIVPVLMDEKGNVLEGGDVSGALCISQAWPGMARTIYGDHQRFVDAYFRAYPGYYFTGDGAHRTEGGYYQITGRMDDVINISGHRLGTAEIEDAMADHPAVPETAVIGYPHDIKGEAAFAFIVLKDNISDENMVVNELKLSVATKIAKYAVPDQILVVKRLPKTRSGKVMRRLLRKIITSRGQDLGDTTTLEDPSVITEILSAFQKYEEQRAATN</sequence>
<reference key="1">
    <citation type="journal article" date="2001" name="J. Biol. Chem.">
        <title>Acetyl-CoA synthetase 2, a mitochondrial matrix enzyme involved in the oxidation of acetate.</title>
        <authorList>
            <person name="Fujino T."/>
            <person name="Kondo J."/>
            <person name="Ishikawa M."/>
            <person name="Morikawa K."/>
            <person name="Yamamoto T.T."/>
        </authorList>
    </citation>
    <scope>NUCLEOTIDE SEQUENCE [MRNA]</scope>
    <scope>FUNCTION</scope>
    <scope>CATALYTIC ACTIVITY</scope>
    <scope>SUBCELLULAR LOCATION</scope>
    <scope>TISSUE SPECIFICITY</scope>
    <scope>BIOPHYSICOCHEMICAL PROPERTIES</scope>
    <scope>INDUCTION</scope>
</reference>
<reference key="2">
    <citation type="journal article" date="2005" name="Science">
        <title>The transcriptional landscape of the mammalian genome.</title>
        <authorList>
            <person name="Carninci P."/>
            <person name="Kasukawa T."/>
            <person name="Katayama S."/>
            <person name="Gough J."/>
            <person name="Frith M.C."/>
            <person name="Maeda N."/>
            <person name="Oyama R."/>
            <person name="Ravasi T."/>
            <person name="Lenhard B."/>
            <person name="Wells C."/>
            <person name="Kodzius R."/>
            <person name="Shimokawa K."/>
            <person name="Bajic V.B."/>
            <person name="Brenner S.E."/>
            <person name="Batalov S."/>
            <person name="Forrest A.R."/>
            <person name="Zavolan M."/>
            <person name="Davis M.J."/>
            <person name="Wilming L.G."/>
            <person name="Aidinis V."/>
            <person name="Allen J.E."/>
            <person name="Ambesi-Impiombato A."/>
            <person name="Apweiler R."/>
            <person name="Aturaliya R.N."/>
            <person name="Bailey T.L."/>
            <person name="Bansal M."/>
            <person name="Baxter L."/>
            <person name="Beisel K.W."/>
            <person name="Bersano T."/>
            <person name="Bono H."/>
            <person name="Chalk A.M."/>
            <person name="Chiu K.P."/>
            <person name="Choudhary V."/>
            <person name="Christoffels A."/>
            <person name="Clutterbuck D.R."/>
            <person name="Crowe M.L."/>
            <person name="Dalla E."/>
            <person name="Dalrymple B.P."/>
            <person name="de Bono B."/>
            <person name="Della Gatta G."/>
            <person name="di Bernardo D."/>
            <person name="Down T."/>
            <person name="Engstrom P."/>
            <person name="Fagiolini M."/>
            <person name="Faulkner G."/>
            <person name="Fletcher C.F."/>
            <person name="Fukushima T."/>
            <person name="Furuno M."/>
            <person name="Futaki S."/>
            <person name="Gariboldi M."/>
            <person name="Georgii-Hemming P."/>
            <person name="Gingeras T.R."/>
            <person name="Gojobori T."/>
            <person name="Green R.E."/>
            <person name="Gustincich S."/>
            <person name="Harbers M."/>
            <person name="Hayashi Y."/>
            <person name="Hensch T.K."/>
            <person name="Hirokawa N."/>
            <person name="Hill D."/>
            <person name="Huminiecki L."/>
            <person name="Iacono M."/>
            <person name="Ikeo K."/>
            <person name="Iwama A."/>
            <person name="Ishikawa T."/>
            <person name="Jakt M."/>
            <person name="Kanapin A."/>
            <person name="Katoh M."/>
            <person name="Kawasawa Y."/>
            <person name="Kelso J."/>
            <person name="Kitamura H."/>
            <person name="Kitano H."/>
            <person name="Kollias G."/>
            <person name="Krishnan S.P."/>
            <person name="Kruger A."/>
            <person name="Kummerfeld S.K."/>
            <person name="Kurochkin I.V."/>
            <person name="Lareau L.F."/>
            <person name="Lazarevic D."/>
            <person name="Lipovich L."/>
            <person name="Liu J."/>
            <person name="Liuni S."/>
            <person name="McWilliam S."/>
            <person name="Madan Babu M."/>
            <person name="Madera M."/>
            <person name="Marchionni L."/>
            <person name="Matsuda H."/>
            <person name="Matsuzawa S."/>
            <person name="Miki H."/>
            <person name="Mignone F."/>
            <person name="Miyake S."/>
            <person name="Morris K."/>
            <person name="Mottagui-Tabar S."/>
            <person name="Mulder N."/>
            <person name="Nakano N."/>
            <person name="Nakauchi H."/>
            <person name="Ng P."/>
            <person name="Nilsson R."/>
            <person name="Nishiguchi S."/>
            <person name="Nishikawa S."/>
            <person name="Nori F."/>
            <person name="Ohara O."/>
            <person name="Okazaki Y."/>
            <person name="Orlando V."/>
            <person name="Pang K.C."/>
            <person name="Pavan W.J."/>
            <person name="Pavesi G."/>
            <person name="Pesole G."/>
            <person name="Petrovsky N."/>
            <person name="Piazza S."/>
            <person name="Reed J."/>
            <person name="Reid J.F."/>
            <person name="Ring B.Z."/>
            <person name="Ringwald M."/>
            <person name="Rost B."/>
            <person name="Ruan Y."/>
            <person name="Salzberg S.L."/>
            <person name="Sandelin A."/>
            <person name="Schneider C."/>
            <person name="Schoenbach C."/>
            <person name="Sekiguchi K."/>
            <person name="Semple C.A."/>
            <person name="Seno S."/>
            <person name="Sessa L."/>
            <person name="Sheng Y."/>
            <person name="Shibata Y."/>
            <person name="Shimada H."/>
            <person name="Shimada K."/>
            <person name="Silva D."/>
            <person name="Sinclair B."/>
            <person name="Sperling S."/>
            <person name="Stupka E."/>
            <person name="Sugiura K."/>
            <person name="Sultana R."/>
            <person name="Takenaka Y."/>
            <person name="Taki K."/>
            <person name="Tammoja K."/>
            <person name="Tan S.L."/>
            <person name="Tang S."/>
            <person name="Taylor M.S."/>
            <person name="Tegner J."/>
            <person name="Teichmann S.A."/>
            <person name="Ueda H.R."/>
            <person name="van Nimwegen E."/>
            <person name="Verardo R."/>
            <person name="Wei C.L."/>
            <person name="Yagi K."/>
            <person name="Yamanishi H."/>
            <person name="Zabarovsky E."/>
            <person name="Zhu S."/>
            <person name="Zimmer A."/>
            <person name="Hide W."/>
            <person name="Bult C."/>
            <person name="Grimmond S.M."/>
            <person name="Teasdale R.D."/>
            <person name="Liu E.T."/>
            <person name="Brusic V."/>
            <person name="Quackenbush J."/>
            <person name="Wahlestedt C."/>
            <person name="Mattick J.S."/>
            <person name="Hume D.A."/>
            <person name="Kai C."/>
            <person name="Sasaki D."/>
            <person name="Tomaru Y."/>
            <person name="Fukuda S."/>
            <person name="Kanamori-Katayama M."/>
            <person name="Suzuki M."/>
            <person name="Aoki J."/>
            <person name="Arakawa T."/>
            <person name="Iida J."/>
            <person name="Imamura K."/>
            <person name="Itoh M."/>
            <person name="Kato T."/>
            <person name="Kawaji H."/>
            <person name="Kawagashira N."/>
            <person name="Kawashima T."/>
            <person name="Kojima M."/>
            <person name="Kondo S."/>
            <person name="Konno H."/>
            <person name="Nakano K."/>
            <person name="Ninomiya N."/>
            <person name="Nishio T."/>
            <person name="Okada M."/>
            <person name="Plessy C."/>
            <person name="Shibata K."/>
            <person name="Shiraki T."/>
            <person name="Suzuki S."/>
            <person name="Tagami M."/>
            <person name="Waki K."/>
            <person name="Watahiki A."/>
            <person name="Okamura-Oho Y."/>
            <person name="Suzuki H."/>
            <person name="Kawai J."/>
            <person name="Hayashizaki Y."/>
        </authorList>
    </citation>
    <scope>NUCLEOTIDE SEQUENCE [LARGE SCALE MRNA]</scope>
    <source>
        <strain>NOD</strain>
        <tissue>Thymus</tissue>
    </source>
</reference>
<reference key="3">
    <citation type="journal article" date="2004" name="Genome Res.">
        <title>The status, quality, and expansion of the NIH full-length cDNA project: the Mammalian Gene Collection (MGC).</title>
        <authorList>
            <consortium name="The MGC Project Team"/>
        </authorList>
    </citation>
    <scope>NUCLEOTIDE SEQUENCE [LARGE SCALE MRNA] OF 262-682</scope>
    <source>
        <tissue>Salivary gland</tissue>
    </source>
</reference>
<reference key="4">
    <citation type="journal article" date="2006" name="Proc. Natl. Acad. Sci. U.S.A.">
        <title>Sirtuins deacetylate and activate mammalian acetyl-CoA synthetases.</title>
        <authorList>
            <person name="Hallows W.C."/>
            <person name="Lee S."/>
            <person name="Denu J.M."/>
        </authorList>
    </citation>
    <scope>FUNCTION</scope>
    <scope>CATALYTIC ACTIVITY</scope>
    <scope>ACTIVITY REGULATION</scope>
    <scope>ACETYLATION AT LYS-635</scope>
    <scope>IDENTIFICATION BY MASS SPECTROMETRY</scope>
</reference>
<reference key="5">
    <citation type="journal article" date="2009" name="Cell Metab.">
        <title>Fasting-induced hypothermia and reduced energy production in mice lacking acetyl-CoA synthetase 2.</title>
        <authorList>
            <person name="Sakakibara I."/>
            <person name="Fujino T."/>
            <person name="Ishii M."/>
            <person name="Tanaka T."/>
            <person name="Shimosawa T."/>
            <person name="Miura S."/>
            <person name="Zhang W."/>
            <person name="Tokutake Y."/>
            <person name="Yamamoto J."/>
            <person name="Awano M."/>
            <person name="Iwasaki S."/>
            <person name="Motoike T."/>
            <person name="Okamura M."/>
            <person name="Inagaki T."/>
            <person name="Kita K."/>
            <person name="Ezaki O."/>
            <person name="Naito M."/>
            <person name="Kuwaki T."/>
            <person name="Chohnan S."/>
            <person name="Yamamoto T.T."/>
            <person name="Hammer R.E."/>
            <person name="Kodama T."/>
            <person name="Yanagisawa M."/>
            <person name="Sakai J."/>
        </authorList>
    </citation>
    <scope>FUNCTION</scope>
    <scope>DISRUPTION PHENOTYPE</scope>
</reference>
<reference key="6">
    <citation type="journal article" date="2010" name="Cell">
        <title>A tissue-specific atlas of mouse protein phosphorylation and expression.</title>
        <authorList>
            <person name="Huttlin E.L."/>
            <person name="Jedrychowski M.P."/>
            <person name="Elias J.E."/>
            <person name="Goswami T."/>
            <person name="Rad R."/>
            <person name="Beausoleil S.A."/>
            <person name="Villen J."/>
            <person name="Haas W."/>
            <person name="Sowa M.E."/>
            <person name="Gygi S.P."/>
        </authorList>
    </citation>
    <scope>IDENTIFICATION BY MASS SPECTROMETRY [LARGE SCALE ANALYSIS]</scope>
    <source>
        <tissue>Brain</tissue>
        <tissue>Brown adipose tissue</tissue>
        <tissue>Heart</tissue>
        <tissue>Kidney</tissue>
        <tissue>Lung</tissue>
        <tissue>Spleen</tissue>
        <tissue>Testis</tissue>
    </source>
</reference>